<proteinExistence type="evidence at transcript level"/>
<name>PTH1R_CANLF</name>
<feature type="signal peptide" evidence="3">
    <location>
        <begin position="1"/>
        <end position="28"/>
    </location>
</feature>
<feature type="chain" id="PRO_0000250991" description="Parathyroid hormone/parathyroid hormone-related peptide receptor">
    <location>
        <begin position="29"/>
        <end position="595"/>
    </location>
</feature>
<feature type="topological domain" description="Extracellular" evidence="3">
    <location>
        <begin position="29"/>
        <end position="188"/>
    </location>
</feature>
<feature type="transmembrane region" description="Helical; Name=1" evidence="3">
    <location>
        <begin position="189"/>
        <end position="209"/>
    </location>
</feature>
<feature type="topological domain" description="Cytoplasmic" evidence="3">
    <location>
        <begin position="210"/>
        <end position="223"/>
    </location>
</feature>
<feature type="transmembrane region" description="Helical; Name=2" evidence="3">
    <location>
        <begin position="224"/>
        <end position="244"/>
    </location>
</feature>
<feature type="topological domain" description="Extracellular" evidence="3">
    <location>
        <begin position="245"/>
        <end position="294"/>
    </location>
</feature>
<feature type="transmembrane region" description="Helical; Name=3" evidence="3">
    <location>
        <begin position="295"/>
        <end position="315"/>
    </location>
</feature>
<feature type="topological domain" description="Cytoplasmic" evidence="3">
    <location>
        <begin position="316"/>
        <end position="318"/>
    </location>
</feature>
<feature type="transmembrane region" description="Helical; Name=4" evidence="3">
    <location>
        <begin position="319"/>
        <end position="339"/>
    </location>
</feature>
<feature type="topological domain" description="Extracellular" evidence="3">
    <location>
        <begin position="340"/>
        <end position="360"/>
    </location>
</feature>
<feature type="transmembrane region" description="Helical; Name=5" evidence="3">
    <location>
        <begin position="361"/>
        <end position="381"/>
    </location>
</feature>
<feature type="topological domain" description="Cytoplasmic" evidence="3">
    <location>
        <begin position="382"/>
        <end position="404"/>
    </location>
</feature>
<feature type="transmembrane region" description="Helical; Name=6" evidence="3">
    <location>
        <begin position="405"/>
        <end position="425"/>
    </location>
</feature>
<feature type="topological domain" description="Extracellular" evidence="3">
    <location>
        <begin position="426"/>
        <end position="439"/>
    </location>
</feature>
<feature type="transmembrane region" description="Helical; Name=7" evidence="3">
    <location>
        <begin position="440"/>
        <end position="460"/>
    </location>
</feature>
<feature type="topological domain" description="Cytoplasmic" evidence="3">
    <location>
        <begin position="461"/>
        <end position="595"/>
    </location>
</feature>
<feature type="region of interest" description="Disordered" evidence="4">
    <location>
        <begin position="66"/>
        <end position="103"/>
    </location>
</feature>
<feature type="region of interest" description="Disordered" evidence="4">
    <location>
        <begin position="528"/>
        <end position="595"/>
    </location>
</feature>
<feature type="short sequence motif" description="Important for interaction with G proteins" evidence="1">
    <location>
        <begin position="473"/>
        <end position="476"/>
    </location>
</feature>
<feature type="compositionally biased region" description="Low complexity" evidence="4">
    <location>
        <begin position="547"/>
        <end position="559"/>
    </location>
</feature>
<feature type="modified residue" description="Phosphothreonine" evidence="2">
    <location>
        <position position="553"/>
    </location>
</feature>
<feature type="glycosylation site" description="N-linked (GlcNAc...) asparagine" evidence="3">
    <location>
        <position position="151"/>
    </location>
</feature>
<feature type="glycosylation site" description="N-linked (GlcNAc...) asparagine" evidence="3">
    <location>
        <position position="161"/>
    </location>
</feature>
<feature type="glycosylation site" description="N-linked (GlcNAc...) asparagine" evidence="3">
    <location>
        <position position="166"/>
    </location>
</feature>
<feature type="glycosylation site" description="N-linked (GlcNAc...) asparagine" evidence="3">
    <location>
        <position position="176"/>
    </location>
</feature>
<feature type="disulfide bond" evidence="2">
    <location>
        <begin position="48"/>
        <end position="117"/>
    </location>
</feature>
<feature type="disulfide bond" evidence="2">
    <location>
        <begin position="108"/>
        <end position="148"/>
    </location>
</feature>
<feature type="disulfide bond" evidence="2">
    <location>
        <begin position="131"/>
        <end position="170"/>
    </location>
</feature>
<evidence type="ECO:0000250" key="1"/>
<evidence type="ECO:0000250" key="2">
    <source>
        <dbReference type="UniProtKB" id="Q03431"/>
    </source>
</evidence>
<evidence type="ECO:0000255" key="3"/>
<evidence type="ECO:0000256" key="4">
    <source>
        <dbReference type="SAM" id="MobiDB-lite"/>
    </source>
</evidence>
<evidence type="ECO:0000269" key="5">
    <source>
    </source>
</evidence>
<evidence type="ECO:0000305" key="6"/>
<dbReference type="EMBL" id="AF167095">
    <property type="protein sequence ID" value="AAD55938.1"/>
    <property type="molecule type" value="mRNA"/>
</dbReference>
<dbReference type="RefSeq" id="NP_001003155.1">
    <property type="nucleotide sequence ID" value="NM_001003155.1"/>
</dbReference>
<dbReference type="RefSeq" id="XP_038282296.1">
    <property type="nucleotide sequence ID" value="XM_038426368.1"/>
</dbReference>
<dbReference type="SMR" id="Q9TU31"/>
<dbReference type="FunCoup" id="Q9TU31">
    <property type="interactions" value="2"/>
</dbReference>
<dbReference type="STRING" id="9615.ENSCAFP00000057719"/>
<dbReference type="GlyCosmos" id="Q9TU31">
    <property type="glycosylation" value="4 sites, No reported glycans"/>
</dbReference>
<dbReference type="PaxDb" id="9612-ENSCAFP00000020013"/>
<dbReference type="Ensembl" id="ENSCAFT00000021553.5">
    <property type="protein sequence ID" value="ENSCAFP00000020013.3"/>
    <property type="gene ID" value="ENSCAFG00000013600.5"/>
</dbReference>
<dbReference type="Ensembl" id="ENSCAFT00030045882.1">
    <property type="protein sequence ID" value="ENSCAFP00030040086.1"/>
    <property type="gene ID" value="ENSCAFG00030024884.1"/>
</dbReference>
<dbReference type="Ensembl" id="ENSCAFT00845019581.1">
    <property type="protein sequence ID" value="ENSCAFP00845015315.1"/>
    <property type="gene ID" value="ENSCAFG00845010997.1"/>
</dbReference>
<dbReference type="GeneID" id="403779"/>
<dbReference type="KEGG" id="cfa:403779"/>
<dbReference type="CTD" id="5745"/>
<dbReference type="VEuPathDB" id="HostDB:ENSCAFG00845010997"/>
<dbReference type="VGNC" id="VGNC:45154">
    <property type="gene designation" value="PTH1R"/>
</dbReference>
<dbReference type="eggNOG" id="KOG4564">
    <property type="taxonomic scope" value="Eukaryota"/>
</dbReference>
<dbReference type="GeneTree" id="ENSGT00940000158574"/>
<dbReference type="HOGENOM" id="CLU_002753_4_3_1"/>
<dbReference type="InParanoid" id="Q9TU31"/>
<dbReference type="OMA" id="LICWPEG"/>
<dbReference type="OrthoDB" id="6160250at2759"/>
<dbReference type="TreeFam" id="TF315710"/>
<dbReference type="Reactome" id="R-CFA-373080">
    <property type="pathway name" value="Class B/2 (Secretin family receptors)"/>
</dbReference>
<dbReference type="Proteomes" id="UP000002254">
    <property type="component" value="Chromosome 20"/>
</dbReference>
<dbReference type="Proteomes" id="UP000694429">
    <property type="component" value="Chromosome 20"/>
</dbReference>
<dbReference type="Proteomes" id="UP000694542">
    <property type="component" value="Unplaced"/>
</dbReference>
<dbReference type="Proteomes" id="UP000805418">
    <property type="component" value="Chromosome 20"/>
</dbReference>
<dbReference type="Bgee" id="ENSCAFG00000013600">
    <property type="expression patterns" value="Expressed in renal medulla and 46 other cell types or tissues"/>
</dbReference>
<dbReference type="GO" id="GO:0005886">
    <property type="term" value="C:plasma membrane"/>
    <property type="evidence" value="ECO:0000250"/>
    <property type="project" value="UniProtKB"/>
</dbReference>
<dbReference type="GO" id="GO:0008528">
    <property type="term" value="F:G protein-coupled peptide receptor activity"/>
    <property type="evidence" value="ECO:0000318"/>
    <property type="project" value="GO_Central"/>
</dbReference>
<dbReference type="GO" id="GO:0004991">
    <property type="term" value="F:parathyroid hormone receptor activity"/>
    <property type="evidence" value="ECO:0000250"/>
    <property type="project" value="UniProtKB"/>
</dbReference>
<dbReference type="GO" id="GO:0017046">
    <property type="term" value="F:peptide hormone binding"/>
    <property type="evidence" value="ECO:0000250"/>
    <property type="project" value="UniProtKB"/>
</dbReference>
<dbReference type="GO" id="GO:0042803">
    <property type="term" value="F:protein homodimerization activity"/>
    <property type="evidence" value="ECO:0000250"/>
    <property type="project" value="UniProtKB"/>
</dbReference>
<dbReference type="GO" id="GO:0007189">
    <property type="term" value="P:adenylate cyclase-activating G protein-coupled receptor signaling pathway"/>
    <property type="evidence" value="ECO:0000250"/>
    <property type="project" value="UniProtKB"/>
</dbReference>
<dbReference type="GO" id="GO:0007188">
    <property type="term" value="P:adenylate cyclase-modulating G protein-coupled receptor signaling pathway"/>
    <property type="evidence" value="ECO:0000250"/>
    <property type="project" value="UniProtKB"/>
</dbReference>
<dbReference type="GO" id="GO:0007166">
    <property type="term" value="P:cell surface receptor signaling pathway"/>
    <property type="evidence" value="ECO:0007669"/>
    <property type="project" value="InterPro"/>
</dbReference>
<dbReference type="GO" id="GO:0006874">
    <property type="term" value="P:intracellular calcium ion homeostasis"/>
    <property type="evidence" value="ECO:0000318"/>
    <property type="project" value="GO_Central"/>
</dbReference>
<dbReference type="FunFam" id="1.20.1070.10:FF:000070">
    <property type="entry name" value="Parathyroid hormone/parathyroid hormone-related peptide receptor"/>
    <property type="match status" value="1"/>
</dbReference>
<dbReference type="Gene3D" id="4.10.1240.10">
    <property type="entry name" value="GPCR, family 2, extracellular hormone receptor domain"/>
    <property type="match status" value="1"/>
</dbReference>
<dbReference type="Gene3D" id="1.20.1070.10">
    <property type="entry name" value="Rhodopsin 7-helix transmembrane proteins"/>
    <property type="match status" value="1"/>
</dbReference>
<dbReference type="InterPro" id="IPR050332">
    <property type="entry name" value="GPCR_2"/>
</dbReference>
<dbReference type="InterPro" id="IPR017981">
    <property type="entry name" value="GPCR_2-like_7TM"/>
</dbReference>
<dbReference type="InterPro" id="IPR036445">
    <property type="entry name" value="GPCR_2_extracell_dom_sf"/>
</dbReference>
<dbReference type="InterPro" id="IPR001879">
    <property type="entry name" value="GPCR_2_extracellular_dom"/>
</dbReference>
<dbReference type="InterPro" id="IPR002170">
    <property type="entry name" value="GPCR_2_parathyroid_rcpt"/>
</dbReference>
<dbReference type="InterPro" id="IPR000832">
    <property type="entry name" value="GPCR_2_secretin-like"/>
</dbReference>
<dbReference type="InterPro" id="IPR017983">
    <property type="entry name" value="GPCR_2_secretin-like_CS"/>
</dbReference>
<dbReference type="PANTHER" id="PTHR45620:SF27">
    <property type="entry name" value="PARATHYROID HORMONE_PARATHYROID HORMONE-RELATED PEPTIDE RECEPTOR"/>
    <property type="match status" value="1"/>
</dbReference>
<dbReference type="PANTHER" id="PTHR45620">
    <property type="entry name" value="PDF RECEPTOR-LIKE PROTEIN-RELATED"/>
    <property type="match status" value="1"/>
</dbReference>
<dbReference type="Pfam" id="PF00002">
    <property type="entry name" value="7tm_2"/>
    <property type="match status" value="1"/>
</dbReference>
<dbReference type="Pfam" id="PF02793">
    <property type="entry name" value="HRM"/>
    <property type="match status" value="1"/>
</dbReference>
<dbReference type="PRINTS" id="PR00249">
    <property type="entry name" value="GPCRSECRETIN"/>
</dbReference>
<dbReference type="PRINTS" id="PR00393">
    <property type="entry name" value="PTRHORMONER"/>
</dbReference>
<dbReference type="SMART" id="SM00008">
    <property type="entry name" value="HormR"/>
    <property type="match status" value="1"/>
</dbReference>
<dbReference type="SUPFAM" id="SSF81321">
    <property type="entry name" value="Family A G protein-coupled receptor-like"/>
    <property type="match status" value="1"/>
</dbReference>
<dbReference type="SUPFAM" id="SSF111418">
    <property type="entry name" value="Hormone receptor domain"/>
    <property type="match status" value="1"/>
</dbReference>
<dbReference type="PROSITE" id="PS00649">
    <property type="entry name" value="G_PROTEIN_RECEP_F2_1"/>
    <property type="match status" value="1"/>
</dbReference>
<dbReference type="PROSITE" id="PS00650">
    <property type="entry name" value="G_PROTEIN_RECEP_F2_2"/>
    <property type="match status" value="1"/>
</dbReference>
<dbReference type="PROSITE" id="PS50227">
    <property type="entry name" value="G_PROTEIN_RECEP_F2_3"/>
    <property type="match status" value="1"/>
</dbReference>
<dbReference type="PROSITE" id="PS50261">
    <property type="entry name" value="G_PROTEIN_RECEP_F2_4"/>
    <property type="match status" value="1"/>
</dbReference>
<gene>
    <name type="primary">PTH1R</name>
    <name type="synonym">PTH1</name>
    <name type="synonym">PTHR1</name>
</gene>
<accession>Q9TU31</accession>
<organism>
    <name type="scientific">Canis lupus familiaris</name>
    <name type="common">Dog</name>
    <name type="synonym">Canis familiaris</name>
    <dbReference type="NCBI Taxonomy" id="9615"/>
    <lineage>
        <taxon>Eukaryota</taxon>
        <taxon>Metazoa</taxon>
        <taxon>Chordata</taxon>
        <taxon>Craniata</taxon>
        <taxon>Vertebrata</taxon>
        <taxon>Euteleostomi</taxon>
        <taxon>Mammalia</taxon>
        <taxon>Eutheria</taxon>
        <taxon>Laurasiatheria</taxon>
        <taxon>Carnivora</taxon>
        <taxon>Caniformia</taxon>
        <taxon>Canidae</taxon>
        <taxon>Canis</taxon>
    </lineage>
</organism>
<keyword id="KW-1003">Cell membrane</keyword>
<keyword id="KW-1015">Disulfide bond</keyword>
<keyword id="KW-0297">G-protein coupled receptor</keyword>
<keyword id="KW-0325">Glycoprotein</keyword>
<keyword id="KW-0472">Membrane</keyword>
<keyword id="KW-0597">Phosphoprotein</keyword>
<keyword id="KW-0675">Receptor</keyword>
<keyword id="KW-1185">Reference proteome</keyword>
<keyword id="KW-0732">Signal</keyword>
<keyword id="KW-0807">Transducer</keyword>
<keyword id="KW-0812">Transmembrane</keyword>
<keyword id="KW-1133">Transmembrane helix</keyword>
<comment type="function">
    <text evidence="2 5">G-protein-coupled receptor for parathyroid hormone (PTH) and for parathyroid hormone-related peptide (PTHLH) (PubMed:12153143). Ligand binding causes a conformation change that triggers signaling via guanine nucleotide-binding proteins (G proteins) and modulates the activity of downstream effectors, such as adenylate cyclase (cAMP) (By similarity). PTH1R is coupled to G(s) G alpha proteins and mediates activation of adenylate cyclase activity (By similarity). PTHLH dissociates from PTH1R more rapidly than PTH; as consequence, the cAMP response induced by PTHLH decays faster than the response induced by PTH (By similarity).</text>
</comment>
<comment type="subunit">
    <text evidence="2">Homodimer in the absence of bound ligand. Peptide hormone binding leads to dissociation of the homodimer.</text>
</comment>
<comment type="subcellular location">
    <subcellularLocation>
        <location evidence="5">Cell membrane</location>
        <topology evidence="6">Multi-pass membrane protein</topology>
    </subcellularLocation>
</comment>
<comment type="tissue specificity">
    <text evidence="5">High levels in the kidney, with much lower levels in aorta, heart, lung, prostate, testis, and skeletal muscle.</text>
</comment>
<comment type="PTM">
    <text evidence="2">N-glycosylated.</text>
</comment>
<comment type="similarity">
    <text evidence="6">Belongs to the G-protein coupled receptor 2 family.</text>
</comment>
<reference key="1">
    <citation type="journal article" date="2001" name="Mol. Biol. Rep.">
        <title>Molecular cloning and functional characterization of the canine parathyroid hormone/parathyroid hormone related peptide receptor (PTH1).</title>
        <authorList>
            <person name="Smock S.L."/>
            <person name="Vogt G.A."/>
            <person name="Castleberry T.A."/>
            <person name="Lu B."/>
            <person name="Owen T.A."/>
        </authorList>
    </citation>
    <scope>NUCLEOTIDE SEQUENCE [MRNA]</scope>
    <scope>FUNCTION</scope>
    <scope>SUBCELLULAR LOCATION</scope>
    <scope>TISSUE SPECIFICITY</scope>
    <source>
        <tissue>Kidney</tissue>
    </source>
</reference>
<protein>
    <recommendedName>
        <fullName>Parathyroid hormone/parathyroid hormone-related peptide receptor</fullName>
    </recommendedName>
    <alternativeName>
        <fullName>PTH/PTHrP type I receptor</fullName>
        <shortName>PTH/PTHr receptor</shortName>
    </alternativeName>
    <alternativeName>
        <fullName>Parathyroid hormone 1 receptor</fullName>
        <shortName>PTH1 receptor</shortName>
    </alternativeName>
</protein>
<sequence length="595" mass="66309">MGAVRIAPGLALLLCCPVLSSAYALVDADDVMTKEEQIFLLHRAQAQCQKRLKEVLQRPADIMESDKGWASASTSGKPKKEKASGKLYPESEEDKEVPTGSRHRGRPCLPEWDHILCWPLGAPGEVVAVPCPDYIYDFNHKGHAYRRCDRNGSWELVPGHNRTWANYSECVKFLTNETREREVFDRLGMIYTVGYSVSLASLTVAVLILAYFRRLHCTRNYIHMHLFLSFMLRAVSIFVKDAVLYSGATLDEAERLTEEELRAIAQAPPPPTAAAGYAGCRVAVTFFLYFLATNYYWILVEGLYLHSLIFMAFFSEKKYLWGFTVFGWGLPAVFVAVWVSVRATLANTGCWDLSSGNKKWIIQVPILASIVLNFILFINIVRVLATKLRETNAGRCDTRQQYRKLLKSTLVLMPLFGVHYIVFMATPYTEVSGTLWQVQMHYEMLFNSFQGFFVAIIYCFCNGEVQAEIKKSWSRWTLALDFKRKARSGSSSYSYGPMVSHTSVTNVGPRAGLGLPLSPRLLPAAAATTTATTNGHPPIPGHTKPGAPTLPATPPATAAPKDDGFLNGSCSGLDEEASAPERPPALLQEEWETVM</sequence>